<protein>
    <recommendedName>
        <fullName>Homoserine dehydrogenase</fullName>
        <shortName>HDH</shortName>
        <shortName evidence="7">HSD</shortName>
        <ecNumber evidence="4 5 6">1.1.1.3</ecNumber>
    </recommendedName>
    <alternativeName>
        <fullName evidence="7">StHSD</fullName>
    </alternativeName>
</protein>
<keyword id="KW-0002">3D-structure</keyword>
<keyword id="KW-0028">Amino-acid biosynthesis</keyword>
<keyword id="KW-1015">Disulfide bond</keyword>
<keyword id="KW-0479">Metal-binding</keyword>
<keyword id="KW-0486">Methionine biosynthesis</keyword>
<keyword id="KW-0520">NAD</keyword>
<keyword id="KW-0521">NADP</keyword>
<keyword id="KW-0547">Nucleotide-binding</keyword>
<keyword id="KW-0560">Oxidoreductase</keyword>
<keyword id="KW-1185">Reference proteome</keyword>
<keyword id="KW-0915">Sodium</keyword>
<keyword id="KW-0791">Threonine biosynthesis</keyword>
<dbReference type="EC" id="1.1.1.3" evidence="4 5 6"/>
<dbReference type="EMBL" id="BA000023">
    <property type="protein sequence ID" value="BAK54611.1"/>
    <property type="molecule type" value="Genomic_DNA"/>
</dbReference>
<dbReference type="RefSeq" id="WP_052846974.1">
    <property type="nucleotide sequence ID" value="NC_003106.2"/>
</dbReference>
<dbReference type="PDB" id="4YDR">
    <property type="method" value="X-ray"/>
    <property type="resolution" value="1.60 A"/>
    <property type="chains" value="A/B=1-304"/>
</dbReference>
<dbReference type="PDB" id="5AVO">
    <property type="method" value="X-ray"/>
    <property type="resolution" value="1.80 A"/>
    <property type="chains" value="A/B=1-304"/>
</dbReference>
<dbReference type="PDB" id="5X9D">
    <property type="method" value="X-ray"/>
    <property type="resolution" value="2.10 A"/>
    <property type="chains" value="A=1-304"/>
</dbReference>
<dbReference type="PDB" id="7F4B">
    <property type="method" value="X-ray"/>
    <property type="resolution" value="2.05 A"/>
    <property type="chains" value="A/B=1-304"/>
</dbReference>
<dbReference type="PDB" id="7F4C">
    <property type="method" value="X-ray"/>
    <property type="resolution" value="1.90 A"/>
    <property type="chains" value="A/B=1-304"/>
</dbReference>
<dbReference type="PDBsum" id="4YDR"/>
<dbReference type="PDBsum" id="5AVO"/>
<dbReference type="PDBsum" id="5X9D"/>
<dbReference type="PDBsum" id="7F4B"/>
<dbReference type="PDBsum" id="7F4C"/>
<dbReference type="SMR" id="F9VNG5"/>
<dbReference type="STRING" id="273063.STK_15190"/>
<dbReference type="GeneID" id="1459554"/>
<dbReference type="KEGG" id="sto:STK_15190"/>
<dbReference type="PATRIC" id="fig|273063.9.peg.1726"/>
<dbReference type="eggNOG" id="arCOG01351">
    <property type="taxonomic scope" value="Archaea"/>
</dbReference>
<dbReference type="OrthoDB" id="4488at2157"/>
<dbReference type="BRENDA" id="1.1.1.3">
    <property type="organism ID" value="15396"/>
</dbReference>
<dbReference type="UniPathway" id="UPA00050">
    <property type="reaction ID" value="UER00063"/>
</dbReference>
<dbReference type="UniPathway" id="UPA00051">
    <property type="reaction ID" value="UER00465"/>
</dbReference>
<dbReference type="EvolutionaryTrace" id="F9VNG5"/>
<dbReference type="Proteomes" id="UP000001015">
    <property type="component" value="Chromosome"/>
</dbReference>
<dbReference type="GO" id="GO:0004412">
    <property type="term" value="F:homoserine dehydrogenase activity"/>
    <property type="evidence" value="ECO:0000314"/>
    <property type="project" value="UniProtKB"/>
</dbReference>
<dbReference type="GO" id="GO:0046872">
    <property type="term" value="F:metal ion binding"/>
    <property type="evidence" value="ECO:0007669"/>
    <property type="project" value="UniProtKB-KW"/>
</dbReference>
<dbReference type="GO" id="GO:0050661">
    <property type="term" value="F:NADP binding"/>
    <property type="evidence" value="ECO:0007669"/>
    <property type="project" value="InterPro"/>
</dbReference>
<dbReference type="GO" id="GO:0009086">
    <property type="term" value="P:methionine biosynthetic process"/>
    <property type="evidence" value="ECO:0000314"/>
    <property type="project" value="UniProtKB"/>
</dbReference>
<dbReference type="GO" id="GO:0009088">
    <property type="term" value="P:threonine biosynthetic process"/>
    <property type="evidence" value="ECO:0000314"/>
    <property type="project" value="UniProtKB"/>
</dbReference>
<dbReference type="FunFam" id="3.30.360.10:FF:000005">
    <property type="entry name" value="Homoserine dehydrogenase"/>
    <property type="match status" value="1"/>
</dbReference>
<dbReference type="Gene3D" id="3.30.360.10">
    <property type="entry name" value="Dihydrodipicolinate Reductase, domain 2"/>
    <property type="match status" value="1"/>
</dbReference>
<dbReference type="Gene3D" id="3.40.50.720">
    <property type="entry name" value="NAD(P)-binding Rossmann-like Domain"/>
    <property type="match status" value="1"/>
</dbReference>
<dbReference type="InterPro" id="IPR005106">
    <property type="entry name" value="Asp/hSer_DH_NAD-bd"/>
</dbReference>
<dbReference type="InterPro" id="IPR001342">
    <property type="entry name" value="HDH_cat"/>
</dbReference>
<dbReference type="InterPro" id="IPR019811">
    <property type="entry name" value="HDH_CS"/>
</dbReference>
<dbReference type="InterPro" id="IPR022697">
    <property type="entry name" value="HDH_short"/>
</dbReference>
<dbReference type="InterPro" id="IPR036291">
    <property type="entry name" value="NAD(P)-bd_dom_sf"/>
</dbReference>
<dbReference type="PANTHER" id="PTHR43331">
    <property type="entry name" value="HOMOSERINE DEHYDROGENASE"/>
    <property type="match status" value="1"/>
</dbReference>
<dbReference type="PANTHER" id="PTHR43331:SF1">
    <property type="entry name" value="HOMOSERINE DEHYDROGENASE"/>
    <property type="match status" value="1"/>
</dbReference>
<dbReference type="Pfam" id="PF00742">
    <property type="entry name" value="Homoserine_dh"/>
    <property type="match status" value="1"/>
</dbReference>
<dbReference type="Pfam" id="PF03447">
    <property type="entry name" value="NAD_binding_3"/>
    <property type="match status" value="1"/>
</dbReference>
<dbReference type="PIRSF" id="PIRSF036497">
    <property type="entry name" value="HDH_short"/>
    <property type="match status" value="1"/>
</dbReference>
<dbReference type="SUPFAM" id="SSF55347">
    <property type="entry name" value="Glyceraldehyde-3-phosphate dehydrogenase-like, C-terminal domain"/>
    <property type="match status" value="1"/>
</dbReference>
<dbReference type="SUPFAM" id="SSF51735">
    <property type="entry name" value="NAD(P)-binding Rossmann-fold domains"/>
    <property type="match status" value="1"/>
</dbReference>
<dbReference type="PROSITE" id="PS01042">
    <property type="entry name" value="HOMOSER_DHGENASE"/>
    <property type="match status" value="1"/>
</dbReference>
<name>DHOM_SULTO</name>
<proteinExistence type="evidence at protein level"/>
<feature type="chain" id="PRO_0000460557" description="Homoserine dehydrogenase">
    <location>
        <begin position="1"/>
        <end position="304"/>
    </location>
</feature>
<feature type="active site" description="Proton donor" evidence="3">
    <location>
        <position position="200"/>
    </location>
</feature>
<feature type="binding site" evidence="6 18">
    <location>
        <position position="8"/>
    </location>
    <ligand>
        <name>NADP(+)</name>
        <dbReference type="ChEBI" id="CHEBI:58349"/>
    </ligand>
</feature>
<feature type="binding site" evidence="1">
    <location>
        <position position="8"/>
    </location>
    <ligand>
        <name>NADPH</name>
        <dbReference type="ChEBI" id="CHEBI:57783"/>
    </ligand>
</feature>
<feature type="binding site" evidence="6 18">
    <location>
        <position position="10"/>
    </location>
    <ligand>
        <name>NADP(+)</name>
        <dbReference type="ChEBI" id="CHEBI:58349"/>
    </ligand>
</feature>
<feature type="binding site" evidence="2">
    <location>
        <position position="11"/>
    </location>
    <ligand>
        <name>NAD(+)</name>
        <dbReference type="ChEBI" id="CHEBI:57540"/>
    </ligand>
</feature>
<feature type="binding site" evidence="6 18">
    <location>
        <position position="11"/>
    </location>
    <ligand>
        <name>NADP(+)</name>
        <dbReference type="ChEBI" id="CHEBI:58349"/>
    </ligand>
</feature>
<feature type="binding site" evidence="1">
    <location>
        <position position="11"/>
    </location>
    <ligand>
        <name>NADPH</name>
        <dbReference type="ChEBI" id="CHEBI:57783"/>
    </ligand>
</feature>
<feature type="binding site" evidence="6 18">
    <location>
        <position position="38"/>
    </location>
    <ligand>
        <name>NADP(+)</name>
        <dbReference type="ChEBI" id="CHEBI:58349"/>
    </ligand>
</feature>
<feature type="binding site" evidence="1">
    <location>
        <position position="38"/>
    </location>
    <ligand>
        <name>NADPH</name>
        <dbReference type="ChEBI" id="CHEBI:57783"/>
    </ligand>
</feature>
<feature type="binding site" evidence="6 18">
    <location>
        <position position="39"/>
    </location>
    <ligand>
        <name>NADP(+)</name>
        <dbReference type="ChEBI" id="CHEBI:58349"/>
    </ligand>
</feature>
<feature type="binding site" evidence="2">
    <location>
        <position position="73"/>
    </location>
    <ligand>
        <name>NAD(+)</name>
        <dbReference type="ChEBI" id="CHEBI:57540"/>
    </ligand>
</feature>
<feature type="binding site" evidence="6 18">
    <location>
        <position position="73"/>
    </location>
    <ligand>
        <name>NADP(+)</name>
        <dbReference type="ChEBI" id="CHEBI:58349"/>
    </ligand>
</feature>
<feature type="binding site" evidence="1">
    <location>
        <position position="73"/>
    </location>
    <ligand>
        <name>NADPH</name>
        <dbReference type="ChEBI" id="CHEBI:57783"/>
    </ligand>
</feature>
<feature type="binding site" evidence="1">
    <location>
        <position position="74"/>
    </location>
    <ligand>
        <name>NADPH</name>
        <dbReference type="ChEBI" id="CHEBI:57783"/>
    </ligand>
</feature>
<feature type="binding site" evidence="6 18">
    <location>
        <position position="100"/>
    </location>
    <ligand>
        <name>NADP(+)</name>
        <dbReference type="ChEBI" id="CHEBI:58349"/>
    </ligand>
</feature>
<feature type="binding site" evidence="1">
    <location>
        <position position="100"/>
    </location>
    <ligand>
        <name>NADPH</name>
        <dbReference type="ChEBI" id="CHEBI:57783"/>
    </ligand>
</feature>
<feature type="binding site" evidence="6 18">
    <location>
        <position position="102"/>
    </location>
    <ligand>
        <name>NADP(+)</name>
        <dbReference type="ChEBI" id="CHEBI:58349"/>
    </ligand>
</feature>
<feature type="binding site" evidence="1">
    <location>
        <position position="102"/>
    </location>
    <ligand>
        <name>NADPH</name>
        <dbReference type="ChEBI" id="CHEBI:57783"/>
    </ligand>
</feature>
<feature type="binding site" evidence="2">
    <location>
        <position position="129"/>
    </location>
    <ligand>
        <name>Na(+)</name>
        <dbReference type="ChEBI" id="CHEBI:29101"/>
    </ligand>
</feature>
<feature type="binding site" evidence="1">
    <location>
        <position position="133"/>
    </location>
    <ligand>
        <name>Na(+)</name>
        <dbReference type="ChEBI" id="CHEBI:29101"/>
    </ligand>
</feature>
<feature type="binding site" evidence="6 18">
    <location>
        <position position="182"/>
    </location>
    <ligand>
        <name>NADP(+)</name>
        <dbReference type="ChEBI" id="CHEBI:58349"/>
    </ligand>
</feature>
<feature type="binding site" evidence="2">
    <location>
        <position position="185"/>
    </location>
    <ligand>
        <name>L-homoserine</name>
        <dbReference type="ChEBI" id="CHEBI:57476"/>
    </ligand>
</feature>
<feature type="binding site" evidence="6 18">
    <location>
        <position position="185"/>
    </location>
    <ligand>
        <name>NADP(+)</name>
        <dbReference type="ChEBI" id="CHEBI:58349"/>
    </ligand>
</feature>
<feature type="binding site" evidence="2">
    <location>
        <position position="196"/>
    </location>
    <ligand>
        <name>L-homoserine</name>
        <dbReference type="ChEBI" id="CHEBI:57476"/>
    </ligand>
</feature>
<feature type="binding site" evidence="2">
    <location>
        <position position="284"/>
    </location>
    <ligand>
        <name>NAD(+)</name>
        <dbReference type="ChEBI" id="CHEBI:57540"/>
    </ligand>
</feature>
<feature type="binding site" evidence="6 18">
    <location>
        <position position="284"/>
    </location>
    <ligand>
        <name>NADP(+)</name>
        <dbReference type="ChEBI" id="CHEBI:58349"/>
    </ligand>
</feature>
<feature type="binding site" evidence="1">
    <location>
        <position position="284"/>
    </location>
    <ligand>
        <name>NADPH</name>
        <dbReference type="ChEBI" id="CHEBI:57783"/>
    </ligand>
</feature>
<feature type="disulfide bond" description="Interchain" evidence="4 5 6 14 15 16 17 18">
    <location>
        <position position="303"/>
    </location>
</feature>
<feature type="strand" evidence="19">
    <location>
        <begin position="2"/>
        <end position="6"/>
    </location>
</feature>
<feature type="helix" evidence="19">
    <location>
        <begin position="10"/>
        <end position="20"/>
    </location>
</feature>
<feature type="helix" evidence="19">
    <location>
        <begin position="25"/>
        <end position="27"/>
    </location>
</feature>
<feature type="strand" evidence="19">
    <location>
        <begin position="31"/>
        <end position="37"/>
    </location>
</feature>
<feature type="strand" evidence="19">
    <location>
        <begin position="40"/>
        <end position="42"/>
    </location>
</feature>
<feature type="helix" evidence="19">
    <location>
        <begin position="57"/>
        <end position="64"/>
    </location>
</feature>
<feature type="strand" evidence="19">
    <location>
        <begin position="67"/>
        <end position="71"/>
    </location>
</feature>
<feature type="turn" evidence="19">
    <location>
        <begin position="77"/>
        <end position="79"/>
    </location>
</feature>
<feature type="helix" evidence="19">
    <location>
        <begin position="83"/>
        <end position="92"/>
    </location>
</feature>
<feature type="strand" evidence="19">
    <location>
        <begin position="96"/>
        <end position="99"/>
    </location>
</feature>
<feature type="helix" evidence="19">
    <location>
        <begin position="103"/>
        <end position="119"/>
    </location>
</feature>
<feature type="helix" evidence="19">
    <location>
        <begin position="126"/>
        <end position="128"/>
    </location>
</feature>
<feature type="turn" evidence="20">
    <location>
        <begin position="129"/>
        <end position="132"/>
    </location>
</feature>
<feature type="strand" evidence="21">
    <location>
        <begin position="133"/>
        <end position="135"/>
    </location>
</feature>
<feature type="helix" evidence="19">
    <location>
        <begin position="136"/>
        <end position="140"/>
    </location>
</feature>
<feature type="strand" evidence="19">
    <location>
        <begin position="147"/>
        <end position="153"/>
    </location>
</feature>
<feature type="helix" evidence="19">
    <location>
        <begin position="156"/>
        <end position="165"/>
    </location>
</feature>
<feature type="turn" evidence="19">
    <location>
        <begin position="166"/>
        <end position="168"/>
    </location>
</feature>
<feature type="helix" evidence="19">
    <location>
        <begin position="171"/>
        <end position="180"/>
    </location>
</feature>
<feature type="helix" evidence="19">
    <location>
        <begin position="189"/>
        <end position="191"/>
    </location>
</feature>
<feature type="strand" evidence="19">
    <location>
        <begin position="192"/>
        <end position="194"/>
    </location>
</feature>
<feature type="helix" evidence="19">
    <location>
        <begin position="195"/>
        <end position="208"/>
    </location>
</feature>
<feature type="helix" evidence="19">
    <location>
        <begin position="215"/>
        <end position="217"/>
    </location>
</feature>
<feature type="strand" evidence="19">
    <location>
        <begin position="229"/>
        <end position="231"/>
    </location>
</feature>
<feature type="strand" evidence="19">
    <location>
        <begin position="233"/>
        <end position="242"/>
    </location>
</feature>
<feature type="strand" evidence="19">
    <location>
        <begin position="244"/>
        <end position="250"/>
    </location>
</feature>
<feature type="turn" evidence="19">
    <location>
        <begin position="256"/>
        <end position="259"/>
    </location>
</feature>
<feature type="strand" evidence="19">
    <location>
        <begin position="264"/>
        <end position="273"/>
    </location>
</feature>
<feature type="strand" evidence="19">
    <location>
        <begin position="275"/>
        <end position="281"/>
    </location>
</feature>
<feature type="helix" evidence="19">
    <location>
        <begin position="285"/>
        <end position="300"/>
    </location>
</feature>
<sequence>MKLLLFGYGNVGKAFRKLLHEKRSPELNDVIIGGIVTRRGIMLQDKEDFTPDLEGDVFKAFEKIKPDIIVDVSSANYNNGEPSLSLYKEAIKDGVNIITTNKAPLALAFNEIFSLARSKGVKIGFQGTVMSGTPSINLYRVLPGSRVIKIRGILNGTTNFILTLMNKGVSFEEALKEAQRRGYAEEDPTLDINGFDAAAKITILANFMIGNSVTIKDVKFEGINRDLPKNEKIKLIAYADEKEVWVKPLPISQDDPLYNVDGVENALEITTDIQSILIRGPGAGPVNAAYGALSDLILLKRDCL</sequence>
<accession>F9VNG5</accession>
<organism evidence="13">
    <name type="scientific">Sulfurisphaera tokodaii (strain DSM 16993 / JCM 10545 / NBRC 100140 / 7)</name>
    <name type="common">Sulfolobus tokodaii</name>
    <dbReference type="NCBI Taxonomy" id="273063"/>
    <lineage>
        <taxon>Archaea</taxon>
        <taxon>Thermoproteota</taxon>
        <taxon>Thermoprotei</taxon>
        <taxon>Sulfolobales</taxon>
        <taxon>Sulfolobaceae</taxon>
        <taxon>Sulfurisphaera</taxon>
    </lineage>
</organism>
<reference evidence="13" key="1">
    <citation type="journal article" date="2001" name="DNA Res.">
        <title>Complete genome sequence of an aerobic thermoacidophilic Crenarchaeon, Sulfolobus tokodaii strain7.</title>
        <authorList>
            <person name="Kawarabayasi Y."/>
            <person name="Hino Y."/>
            <person name="Horikawa H."/>
            <person name="Jin-no K."/>
            <person name="Takahashi M."/>
            <person name="Sekine M."/>
            <person name="Baba S."/>
            <person name="Ankai A."/>
            <person name="Kosugi H."/>
            <person name="Hosoyama A."/>
            <person name="Fukui S."/>
            <person name="Nagai Y."/>
            <person name="Nishijima K."/>
            <person name="Otsuka R."/>
            <person name="Nakazawa H."/>
            <person name="Takamiya M."/>
            <person name="Kato Y."/>
            <person name="Yoshizawa T."/>
            <person name="Tanaka T."/>
            <person name="Kudoh Y."/>
            <person name="Yamazaki J."/>
            <person name="Kushida N."/>
            <person name="Oguchi A."/>
            <person name="Aoki K."/>
            <person name="Masuda S."/>
            <person name="Yanagii M."/>
            <person name="Nishimura M."/>
            <person name="Yamagishi A."/>
            <person name="Oshima T."/>
            <person name="Kikuchi H."/>
        </authorList>
    </citation>
    <scope>NUCLEOTIDE SEQUENCE [LARGE SCALE GENOMIC DNA]</scope>
    <source>
        <strain evidence="13">DSM 16993 / JCM 10545 / NBRC 100140 / 7</strain>
    </source>
</reference>
<reference evidence="14 15" key="2">
    <citation type="journal article" date="2015" name="Biophys. Chem.">
        <title>Structural insight into activation of homoserine dehydrogenase from the archaeon Sulfolobus tokodaii via reduction.</title>
        <authorList>
            <person name="Tomonaga Y."/>
            <person name="Kaneko R."/>
            <person name="Goto M."/>
            <person name="Ohshima T."/>
            <person name="Yoshimune K."/>
        </authorList>
    </citation>
    <scope>X-RAY CRYSTALLOGRAPHY (1.60 ANGSTROMS)</scope>
    <scope>FUNCTION</scope>
    <scope>CATALYTIC ACTIVITY</scope>
    <scope>BIOPHYSICOCHEMICAL PROPERTIES</scope>
    <scope>SUBUNIT</scope>
    <scope>DISULFIDE BONDS</scope>
</reference>
<reference evidence="16" key="3">
    <citation type="journal article" date="2018" name="Sci. Rep.">
        <title>Inhibition of homoserine dehydrogenase by formation of a cysteine-NAD covalent complex.</title>
        <authorList>
            <person name="Ogata K."/>
            <person name="Yajima Y."/>
            <person name="Nakamura S."/>
            <person name="Kaneko R."/>
            <person name="Goto M."/>
            <person name="Ohshima T."/>
            <person name="Yoshimune K."/>
        </authorList>
    </citation>
    <scope>X-RAY CRYSTALLOGRAPHY (2.10 ANGSTROMS)</scope>
    <scope>FUNCTION</scope>
    <scope>CATALYTIC ACTIVITY</scope>
    <scope>ACTIVITY REGULATION</scope>
    <scope>BIOPHYSICOCHEMICAL PROPERTIES</scope>
    <scope>DISULFIDE BONDS</scope>
</reference>
<reference evidence="17 18" key="4">
    <citation type="journal article" date="2022" name="Commun. Biol.">
        <title>Conformational changes in the catalytic region are responsible for heat-induced activation of hyperthermophilic homoserine dehydrogenase.</title>
        <authorList>
            <person name="Kubota T."/>
            <person name="Kurihara E."/>
            <person name="Watanabe K."/>
            <person name="Ogata K."/>
            <person name="Kaneko R."/>
            <person name="Goto M."/>
            <person name="Ohshima T."/>
            <person name="Yoshimune K."/>
        </authorList>
    </citation>
    <scope>X-RAY CRYSTALLOGRAPHY (1.90 ANGSTROMS) IN COMPLEX WITH NADP(+)</scope>
    <scope>FUNCTION</scope>
    <scope>CATALYTIC ACTIVITY</scope>
    <scope>BIOPHYSICOCHEMICAL PROPERTIES</scope>
    <scope>SUBUNIT</scope>
    <scope>DISULFIDE BOND</scope>
</reference>
<comment type="function">
    <text evidence="4 5 6">Catalyzes the conversion of L-aspartate-beta-semialdehyde (L-Asa) to L-homoserine (L-Hse), the third step in the biosynthesis of threonine and methionine from aspartate.</text>
</comment>
<comment type="catalytic activity">
    <reaction evidence="5">
        <text>L-homoserine + NADP(+) = L-aspartate 4-semialdehyde + NADPH + H(+)</text>
        <dbReference type="Rhea" id="RHEA:15761"/>
        <dbReference type="ChEBI" id="CHEBI:15378"/>
        <dbReference type="ChEBI" id="CHEBI:57476"/>
        <dbReference type="ChEBI" id="CHEBI:57783"/>
        <dbReference type="ChEBI" id="CHEBI:58349"/>
        <dbReference type="ChEBI" id="CHEBI:537519"/>
        <dbReference type="EC" id="1.1.1.3"/>
    </reaction>
    <physiologicalReaction direction="right-to-left" evidence="10">
        <dbReference type="Rhea" id="RHEA:15763"/>
    </physiologicalReaction>
</comment>
<comment type="catalytic activity">
    <reaction evidence="4 5 6">
        <text>L-homoserine + NAD(+) = L-aspartate 4-semialdehyde + NADH + H(+)</text>
        <dbReference type="Rhea" id="RHEA:15757"/>
        <dbReference type="ChEBI" id="CHEBI:15378"/>
        <dbReference type="ChEBI" id="CHEBI:57476"/>
        <dbReference type="ChEBI" id="CHEBI:57540"/>
        <dbReference type="ChEBI" id="CHEBI:57945"/>
        <dbReference type="ChEBI" id="CHEBI:537519"/>
        <dbReference type="EC" id="1.1.1.3"/>
    </reaction>
    <physiologicalReaction direction="right-to-left" evidence="9 10 11">
        <dbReference type="Rhea" id="RHEA:15759"/>
    </physiologicalReaction>
</comment>
<comment type="cofactor">
    <cofactor evidence="2">
        <name>a metal cation</name>
        <dbReference type="ChEBI" id="CHEBI:25213"/>
    </cofactor>
    <text evidence="2">A sodium ion is seen in the structure; a metal ion may subtly affect the relative position of the nucleotide-binding region to influence enzyme activity, and could increase the stability of the enzyme.</text>
</comment>
<comment type="activity regulation">
    <text evidence="5">Inhibited by cysteine.</text>
</comment>
<comment type="biophysicochemical properties">
    <kinetics>
        <KM evidence="6">0.49 mM for L-homoserine (at pH 8 and at 30 degrees Celsius)</KM>
        <KM evidence="4">0.54 mM for L-homoserine (in the reduced form of the enzyme)</KM>
        <KM evidence="4">0.21 mM for L-homoserine (in the oxidized form of the enzyme)</KM>
        <KM evidence="5">1.2 mM for NADP</KM>
        <KM evidence="5">0.33 mM for NAD(+)</KM>
        <KM evidence="6">0.25 mM for NAD(+) (with the immature form of the enzyme)</KM>
        <KM evidence="6">1.1 mM for NAD(+) (with the heat-activated mature form of the enzyme)</KM>
        <KM evidence="4">0.33 mM for NAD(+) (with the reduced form of the enzyme)</KM>
        <KM evidence="4">0.31 mM for NAD(+) (with the oxidized form of the enzyme)</KM>
    </kinetics>
    <phDependence>
        <text evidence="6">Optimum pH is 9.</text>
    </phDependence>
</comment>
<comment type="pathway">
    <text evidence="11">Amino-acid biosynthesis; L-methionine biosynthesis via de novo pathway; L-homoserine from L-aspartate: step 3/3.</text>
</comment>
<comment type="pathway">
    <text evidence="11">Amino-acid biosynthesis; L-threonine biosynthesis; L-threonine from L-aspartate: step 3/5.</text>
</comment>
<comment type="subunit">
    <text evidence="4 6">Homodimer.</text>
</comment>
<comment type="PTM">
    <text evidence="4">The enzyme is activated by reductive cleavage of the interchain disulfide bond between the two subunits.</text>
</comment>
<comment type="similarity">
    <text evidence="8">Belongs to the homoserine dehydrogenase family.</text>
</comment>
<evidence type="ECO:0000250" key="1">
    <source>
        <dbReference type="UniProtKB" id="O58802"/>
    </source>
</evidence>
<evidence type="ECO:0000250" key="2">
    <source>
        <dbReference type="UniProtKB" id="P31116"/>
    </source>
</evidence>
<evidence type="ECO:0000255" key="3">
    <source>
        <dbReference type="PIRSR" id="PIRSR036497-1"/>
    </source>
</evidence>
<evidence type="ECO:0000269" key="4">
    <source>
    </source>
</evidence>
<evidence type="ECO:0000269" key="5">
    <source>
    </source>
</evidence>
<evidence type="ECO:0000269" key="6">
    <source>
    </source>
</evidence>
<evidence type="ECO:0000303" key="7">
    <source>
    </source>
</evidence>
<evidence type="ECO:0000305" key="8"/>
<evidence type="ECO:0000305" key="9">
    <source>
    </source>
</evidence>
<evidence type="ECO:0000305" key="10">
    <source>
    </source>
</evidence>
<evidence type="ECO:0000305" key="11">
    <source>
    </source>
</evidence>
<evidence type="ECO:0000312" key="12">
    <source>
        <dbReference type="EMBL" id="BAK54611.1"/>
    </source>
</evidence>
<evidence type="ECO:0000312" key="13">
    <source>
        <dbReference type="Proteomes" id="UP000001015"/>
    </source>
</evidence>
<evidence type="ECO:0007744" key="14">
    <source>
        <dbReference type="PDB" id="4YDR"/>
    </source>
</evidence>
<evidence type="ECO:0007744" key="15">
    <source>
        <dbReference type="PDB" id="5AVO"/>
    </source>
</evidence>
<evidence type="ECO:0007744" key="16">
    <source>
        <dbReference type="PDB" id="5X9D"/>
    </source>
</evidence>
<evidence type="ECO:0007744" key="17">
    <source>
        <dbReference type="PDB" id="7F4B"/>
    </source>
</evidence>
<evidence type="ECO:0007744" key="18">
    <source>
        <dbReference type="PDB" id="7F4C"/>
    </source>
</evidence>
<evidence type="ECO:0007829" key="19">
    <source>
        <dbReference type="PDB" id="4YDR"/>
    </source>
</evidence>
<evidence type="ECO:0007829" key="20">
    <source>
        <dbReference type="PDB" id="5X9D"/>
    </source>
</evidence>
<evidence type="ECO:0007829" key="21">
    <source>
        <dbReference type="PDB" id="7F4C"/>
    </source>
</evidence>
<gene>
    <name evidence="12" type="primary">hom</name>
    <name evidence="12" type="synonym">ST1519</name>
    <name evidence="12" type="ordered locus">STK_15190</name>
</gene>